<sequence length="253" mass="28134">MRRLLLLCEYDGTLFAGLQRQGRGLRTVQGELERALPGIGALPKAVAAGRTDAGVHALAMPFHVDVESAIPVEKVPEALNRLLPEDLKVVGAREVAPDFHARKDALWRAYRYRILVRPHPSPLLRHRALWVRRPLDLEAMEEALSLLLGRHNFLGFAKEETRPGERELLEARLQVAEGEAGLEVRLYFRGKSFLRGQVRGMVGTLLEVGLGKRPPESLKAILKTADRRLAGPTAPAHGLYFVEAAYPEEKLSP</sequence>
<dbReference type="EC" id="5.4.99.12" evidence="1"/>
<dbReference type="EMBL" id="AE017221">
    <property type="protein sequence ID" value="AAS81609.1"/>
    <property type="molecule type" value="Genomic_DNA"/>
</dbReference>
<dbReference type="RefSeq" id="WP_011173668.1">
    <property type="nucleotide sequence ID" value="NC_005835.1"/>
</dbReference>
<dbReference type="SMR" id="Q72I65"/>
<dbReference type="GeneID" id="3168739"/>
<dbReference type="KEGG" id="tth:TT_C1267"/>
<dbReference type="eggNOG" id="COG0101">
    <property type="taxonomic scope" value="Bacteria"/>
</dbReference>
<dbReference type="HOGENOM" id="CLU_014673_0_1_0"/>
<dbReference type="OrthoDB" id="9811823at2"/>
<dbReference type="Proteomes" id="UP000000592">
    <property type="component" value="Chromosome"/>
</dbReference>
<dbReference type="GO" id="GO:0003723">
    <property type="term" value="F:RNA binding"/>
    <property type="evidence" value="ECO:0007669"/>
    <property type="project" value="InterPro"/>
</dbReference>
<dbReference type="GO" id="GO:0160147">
    <property type="term" value="F:tRNA pseudouridine(38-40) synthase activity"/>
    <property type="evidence" value="ECO:0007669"/>
    <property type="project" value="UniProtKB-EC"/>
</dbReference>
<dbReference type="GO" id="GO:0031119">
    <property type="term" value="P:tRNA pseudouridine synthesis"/>
    <property type="evidence" value="ECO:0007669"/>
    <property type="project" value="UniProtKB-UniRule"/>
</dbReference>
<dbReference type="CDD" id="cd02570">
    <property type="entry name" value="PseudoU_synth_EcTruA"/>
    <property type="match status" value="1"/>
</dbReference>
<dbReference type="Gene3D" id="3.30.70.660">
    <property type="entry name" value="Pseudouridine synthase I, catalytic domain, C-terminal subdomain"/>
    <property type="match status" value="1"/>
</dbReference>
<dbReference type="Gene3D" id="3.30.70.580">
    <property type="entry name" value="Pseudouridine synthase I, catalytic domain, N-terminal subdomain"/>
    <property type="match status" value="1"/>
</dbReference>
<dbReference type="HAMAP" id="MF_00171">
    <property type="entry name" value="TruA"/>
    <property type="match status" value="1"/>
</dbReference>
<dbReference type="InterPro" id="IPR020103">
    <property type="entry name" value="PsdUridine_synth_cat_dom_sf"/>
</dbReference>
<dbReference type="InterPro" id="IPR001406">
    <property type="entry name" value="PsdUridine_synth_TruA"/>
</dbReference>
<dbReference type="InterPro" id="IPR020097">
    <property type="entry name" value="PsdUridine_synth_TruA_a/b_dom"/>
</dbReference>
<dbReference type="InterPro" id="IPR020095">
    <property type="entry name" value="PsdUridine_synth_TruA_C"/>
</dbReference>
<dbReference type="InterPro" id="IPR020094">
    <property type="entry name" value="TruA/RsuA/RluB/E/F_N"/>
</dbReference>
<dbReference type="NCBIfam" id="TIGR00071">
    <property type="entry name" value="hisT_truA"/>
    <property type="match status" value="1"/>
</dbReference>
<dbReference type="PANTHER" id="PTHR11142">
    <property type="entry name" value="PSEUDOURIDYLATE SYNTHASE"/>
    <property type="match status" value="1"/>
</dbReference>
<dbReference type="PANTHER" id="PTHR11142:SF0">
    <property type="entry name" value="TRNA PSEUDOURIDINE SYNTHASE-LIKE 1"/>
    <property type="match status" value="1"/>
</dbReference>
<dbReference type="Pfam" id="PF01416">
    <property type="entry name" value="PseudoU_synth_1"/>
    <property type="match status" value="1"/>
</dbReference>
<dbReference type="PIRSF" id="PIRSF001430">
    <property type="entry name" value="tRNA_psdUrid_synth"/>
    <property type="match status" value="1"/>
</dbReference>
<dbReference type="SUPFAM" id="SSF55120">
    <property type="entry name" value="Pseudouridine synthase"/>
    <property type="match status" value="1"/>
</dbReference>
<comment type="function">
    <text evidence="1">Formation of pseudouridine at positions 38, 39 and 40 in the anticodon stem and loop of transfer RNAs.</text>
</comment>
<comment type="catalytic activity">
    <reaction evidence="1">
        <text>uridine(38/39/40) in tRNA = pseudouridine(38/39/40) in tRNA</text>
        <dbReference type="Rhea" id="RHEA:22376"/>
        <dbReference type="Rhea" id="RHEA-COMP:10085"/>
        <dbReference type="Rhea" id="RHEA-COMP:10087"/>
        <dbReference type="ChEBI" id="CHEBI:65314"/>
        <dbReference type="ChEBI" id="CHEBI:65315"/>
        <dbReference type="EC" id="5.4.99.12"/>
    </reaction>
</comment>
<comment type="subunit">
    <text evidence="1">Homodimer.</text>
</comment>
<comment type="similarity">
    <text evidence="1">Belongs to the tRNA pseudouridine synthase TruA family.</text>
</comment>
<reference key="1">
    <citation type="journal article" date="2004" name="Nat. Biotechnol.">
        <title>The genome sequence of the extreme thermophile Thermus thermophilus.</title>
        <authorList>
            <person name="Henne A."/>
            <person name="Brueggemann H."/>
            <person name="Raasch C."/>
            <person name="Wiezer A."/>
            <person name="Hartsch T."/>
            <person name="Liesegang H."/>
            <person name="Johann A."/>
            <person name="Lienard T."/>
            <person name="Gohl O."/>
            <person name="Martinez-Arias R."/>
            <person name="Jacobi C."/>
            <person name="Starkuviene V."/>
            <person name="Schlenczeck S."/>
            <person name="Dencker S."/>
            <person name="Huber R."/>
            <person name="Klenk H.-P."/>
            <person name="Kramer W."/>
            <person name="Merkl R."/>
            <person name="Gottschalk G."/>
            <person name="Fritz H.-J."/>
        </authorList>
    </citation>
    <scope>NUCLEOTIDE SEQUENCE [LARGE SCALE GENOMIC DNA]</scope>
    <source>
        <strain>ATCC BAA-163 / DSM 7039 / HB27</strain>
    </source>
</reference>
<proteinExistence type="inferred from homology"/>
<gene>
    <name evidence="1" type="primary">truA</name>
    <name type="ordered locus">TT_C1267</name>
</gene>
<evidence type="ECO:0000255" key="1">
    <source>
        <dbReference type="HAMAP-Rule" id="MF_00171"/>
    </source>
</evidence>
<name>TRUA_THET2</name>
<protein>
    <recommendedName>
        <fullName evidence="1">tRNA pseudouridine synthase A</fullName>
        <ecNumber evidence="1">5.4.99.12</ecNumber>
    </recommendedName>
    <alternativeName>
        <fullName evidence="1">tRNA pseudouridine(38-40) synthase</fullName>
    </alternativeName>
    <alternativeName>
        <fullName evidence="1">tRNA pseudouridylate synthase I</fullName>
    </alternativeName>
    <alternativeName>
        <fullName evidence="1">tRNA-uridine isomerase I</fullName>
    </alternativeName>
</protein>
<accession>Q72I65</accession>
<keyword id="KW-0413">Isomerase</keyword>
<keyword id="KW-0819">tRNA processing</keyword>
<feature type="chain" id="PRO_0000057475" description="tRNA pseudouridine synthase A">
    <location>
        <begin position="1"/>
        <end position="253"/>
    </location>
</feature>
<feature type="active site" description="Nucleophile" evidence="1">
    <location>
        <position position="52"/>
    </location>
</feature>
<feature type="binding site" evidence="1">
    <location>
        <position position="110"/>
    </location>
    <ligand>
        <name>substrate</name>
    </ligand>
</feature>
<organism>
    <name type="scientific">Thermus thermophilus (strain ATCC BAA-163 / DSM 7039 / HB27)</name>
    <dbReference type="NCBI Taxonomy" id="262724"/>
    <lineage>
        <taxon>Bacteria</taxon>
        <taxon>Thermotogati</taxon>
        <taxon>Deinococcota</taxon>
        <taxon>Deinococci</taxon>
        <taxon>Thermales</taxon>
        <taxon>Thermaceae</taxon>
        <taxon>Thermus</taxon>
    </lineage>
</organism>